<proteinExistence type="inferred from homology"/>
<protein>
    <recommendedName>
        <fullName evidence="1">Probable small ribosomal subunit protein cS23</fullName>
    </recommendedName>
    <alternativeName>
        <fullName>Probable 30S ribosomal protein PSRP-3</fullName>
    </alternativeName>
    <alternativeName>
        <fullName>Ycf65-like protein</fullName>
    </alternativeName>
</protein>
<name>RRP3_SYNJA</name>
<gene>
    <name type="ordered locus">CYA_0331</name>
</gene>
<evidence type="ECO:0000255" key="1">
    <source>
        <dbReference type="HAMAP-Rule" id="MF_00619"/>
    </source>
</evidence>
<dbReference type="EMBL" id="CP000239">
    <property type="protein sequence ID" value="ABC98551.1"/>
    <property type="molecule type" value="Genomic_DNA"/>
</dbReference>
<dbReference type="SMR" id="Q2JXD5"/>
<dbReference type="STRING" id="321327.CYA_0331"/>
<dbReference type="KEGG" id="cya:CYA_0331"/>
<dbReference type="eggNOG" id="ENOG503137T">
    <property type="taxonomic scope" value="Bacteria"/>
</dbReference>
<dbReference type="HOGENOM" id="CLU_132693_1_0_3"/>
<dbReference type="Proteomes" id="UP000008818">
    <property type="component" value="Chromosome"/>
</dbReference>
<dbReference type="GO" id="GO:1990904">
    <property type="term" value="C:ribonucleoprotein complex"/>
    <property type="evidence" value="ECO:0007669"/>
    <property type="project" value="UniProtKB-KW"/>
</dbReference>
<dbReference type="GO" id="GO:0005840">
    <property type="term" value="C:ribosome"/>
    <property type="evidence" value="ECO:0007669"/>
    <property type="project" value="UniProtKB-KW"/>
</dbReference>
<dbReference type="GO" id="GO:0003735">
    <property type="term" value="F:structural constituent of ribosome"/>
    <property type="evidence" value="ECO:0007669"/>
    <property type="project" value="InterPro"/>
</dbReference>
<dbReference type="GO" id="GO:0006412">
    <property type="term" value="P:translation"/>
    <property type="evidence" value="ECO:0007669"/>
    <property type="project" value="UniProtKB-UniRule"/>
</dbReference>
<dbReference type="Gene3D" id="3.30.390.140">
    <property type="match status" value="1"/>
</dbReference>
<dbReference type="HAMAP" id="MF_00619">
    <property type="entry name" value="Ribosomal_plastid_cS23"/>
    <property type="match status" value="1"/>
</dbReference>
<dbReference type="InterPro" id="IPR038447">
    <property type="entry name" value="PSRP-3/Ycf65_sf"/>
</dbReference>
<dbReference type="InterPro" id="IPR006924">
    <property type="entry name" value="Ribosomal_PSRP3/Ycf65"/>
</dbReference>
<dbReference type="NCBIfam" id="NF002740">
    <property type="entry name" value="PRK02724.1"/>
    <property type="match status" value="1"/>
</dbReference>
<dbReference type="PANTHER" id="PTHR35108">
    <property type="entry name" value="30S RIBOSOMAL PROTEIN 3, CHLOROPLASTIC"/>
    <property type="match status" value="1"/>
</dbReference>
<dbReference type="PANTHER" id="PTHR35108:SF1">
    <property type="entry name" value="OS04G0461100 PROTEIN"/>
    <property type="match status" value="1"/>
</dbReference>
<dbReference type="Pfam" id="PF04839">
    <property type="entry name" value="PSRP-3_Ycf65"/>
    <property type="match status" value="1"/>
</dbReference>
<feature type="chain" id="PRO_1000130442" description="Probable small ribosomal subunit protein cS23">
    <location>
        <begin position="1"/>
        <end position="99"/>
    </location>
</feature>
<sequence>MPKFALKALWLENDLAIAVDQVVAKNRSPLTRYFFWPRDDAWEQLKAELESKTWISEEDRITLLNQATELINYWQNGGRERPISEAQAQFPDILIGGNA</sequence>
<accession>Q2JXD5</accession>
<keyword id="KW-0687">Ribonucleoprotein</keyword>
<keyword id="KW-0689">Ribosomal protein</keyword>
<comment type="function">
    <text evidence="1">Probably a ribosomal protein or a ribosome-associated protein.</text>
</comment>
<comment type="subunit">
    <text evidence="1">Part of the 30S ribosomal subunit.</text>
</comment>
<comment type="similarity">
    <text evidence="1">Belongs to the chloroplast-specific ribosomal protein cS23 family.</text>
</comment>
<reference key="1">
    <citation type="journal article" date="2007" name="ISME J.">
        <title>Population level functional diversity in a microbial community revealed by comparative genomic and metagenomic analyses.</title>
        <authorList>
            <person name="Bhaya D."/>
            <person name="Grossman A.R."/>
            <person name="Steunou A.-S."/>
            <person name="Khuri N."/>
            <person name="Cohan F.M."/>
            <person name="Hamamura N."/>
            <person name="Melendrez M.C."/>
            <person name="Bateson M.M."/>
            <person name="Ward D.M."/>
            <person name="Heidelberg J.F."/>
        </authorList>
    </citation>
    <scope>NUCLEOTIDE SEQUENCE [LARGE SCALE GENOMIC DNA]</scope>
    <source>
        <strain>JA-3-3Ab</strain>
    </source>
</reference>
<organism>
    <name type="scientific">Synechococcus sp. (strain JA-3-3Ab)</name>
    <name type="common">Cyanobacteria bacterium Yellowstone A-Prime</name>
    <dbReference type="NCBI Taxonomy" id="321327"/>
    <lineage>
        <taxon>Bacteria</taxon>
        <taxon>Bacillati</taxon>
        <taxon>Cyanobacteriota</taxon>
        <taxon>Cyanophyceae</taxon>
        <taxon>Synechococcales</taxon>
        <taxon>Synechococcaceae</taxon>
        <taxon>Synechococcus</taxon>
    </lineage>
</organism>